<evidence type="ECO:0000255" key="1">
    <source>
        <dbReference type="HAMAP-Rule" id="MF_00503"/>
    </source>
</evidence>
<evidence type="ECO:0000305" key="2"/>
<name>RL9_CHLTR</name>
<sequence length="167" mass="18437">MKPQLLLLEDVDGLGRSGDLVVAKPGYVRNYLLPKGKAVVASAGTLRLQAKLQEQRLLQAAADKEESLRLAEMLRSIVLDFQVRVDSENNMYGSVTVNDMISAAEQQGVVLTRKNFPRSHSGIKNLGRHVVGLKLKEGVTADLHLEVRADHEIIEQKELQSAEEQEG</sequence>
<accession>O84809</accession>
<protein>
    <recommendedName>
        <fullName evidence="1">Large ribosomal subunit protein bL9</fullName>
    </recommendedName>
    <alternativeName>
        <fullName evidence="2">50S ribosomal protein L9</fullName>
    </alternativeName>
</protein>
<organism>
    <name type="scientific">Chlamydia trachomatis serovar D (strain ATCC VR-885 / DSM 19411 / UW-3/Cx)</name>
    <dbReference type="NCBI Taxonomy" id="272561"/>
    <lineage>
        <taxon>Bacteria</taxon>
        <taxon>Pseudomonadati</taxon>
        <taxon>Chlamydiota</taxon>
        <taxon>Chlamydiia</taxon>
        <taxon>Chlamydiales</taxon>
        <taxon>Chlamydiaceae</taxon>
        <taxon>Chlamydia/Chlamydophila group</taxon>
        <taxon>Chlamydia</taxon>
    </lineage>
</organism>
<keyword id="KW-1185">Reference proteome</keyword>
<keyword id="KW-0687">Ribonucleoprotein</keyword>
<keyword id="KW-0689">Ribosomal protein</keyword>
<keyword id="KW-0694">RNA-binding</keyword>
<keyword id="KW-0699">rRNA-binding</keyword>
<dbReference type="EMBL" id="AE001273">
    <property type="protein sequence ID" value="AAC68398.1"/>
    <property type="molecule type" value="Genomic_DNA"/>
</dbReference>
<dbReference type="PIR" id="A71470">
    <property type="entry name" value="A71470"/>
</dbReference>
<dbReference type="RefSeq" id="NP_220323.1">
    <property type="nucleotide sequence ID" value="NC_000117.1"/>
</dbReference>
<dbReference type="RefSeq" id="WP_009872185.1">
    <property type="nucleotide sequence ID" value="NC_000117.1"/>
</dbReference>
<dbReference type="SMR" id="O84809"/>
<dbReference type="FunCoup" id="O84809">
    <property type="interactions" value="303"/>
</dbReference>
<dbReference type="STRING" id="272561.CT_803"/>
<dbReference type="EnsemblBacteria" id="AAC68398">
    <property type="protein sequence ID" value="AAC68398"/>
    <property type="gene ID" value="CT_803"/>
</dbReference>
<dbReference type="GeneID" id="884603"/>
<dbReference type="KEGG" id="ctr:CT_803"/>
<dbReference type="PATRIC" id="fig|272561.5.peg.884"/>
<dbReference type="HOGENOM" id="CLU_078938_5_1_0"/>
<dbReference type="InParanoid" id="O84809"/>
<dbReference type="OrthoDB" id="9788336at2"/>
<dbReference type="Proteomes" id="UP000000431">
    <property type="component" value="Chromosome"/>
</dbReference>
<dbReference type="GO" id="GO:0022625">
    <property type="term" value="C:cytosolic large ribosomal subunit"/>
    <property type="evidence" value="ECO:0000318"/>
    <property type="project" value="GO_Central"/>
</dbReference>
<dbReference type="GO" id="GO:0019843">
    <property type="term" value="F:rRNA binding"/>
    <property type="evidence" value="ECO:0007669"/>
    <property type="project" value="UniProtKB-UniRule"/>
</dbReference>
<dbReference type="GO" id="GO:0003735">
    <property type="term" value="F:structural constituent of ribosome"/>
    <property type="evidence" value="ECO:0007669"/>
    <property type="project" value="InterPro"/>
</dbReference>
<dbReference type="GO" id="GO:0006412">
    <property type="term" value="P:translation"/>
    <property type="evidence" value="ECO:0007669"/>
    <property type="project" value="UniProtKB-UniRule"/>
</dbReference>
<dbReference type="Gene3D" id="3.10.430.100">
    <property type="entry name" value="Ribosomal protein L9, C-terminal domain"/>
    <property type="match status" value="1"/>
</dbReference>
<dbReference type="Gene3D" id="3.40.5.10">
    <property type="entry name" value="Ribosomal protein L9, N-terminal domain"/>
    <property type="match status" value="1"/>
</dbReference>
<dbReference type="HAMAP" id="MF_00503">
    <property type="entry name" value="Ribosomal_bL9"/>
    <property type="match status" value="1"/>
</dbReference>
<dbReference type="InterPro" id="IPR000244">
    <property type="entry name" value="Ribosomal_bL9"/>
</dbReference>
<dbReference type="InterPro" id="IPR009027">
    <property type="entry name" value="Ribosomal_bL9/RNase_H1_N"/>
</dbReference>
<dbReference type="InterPro" id="IPR020594">
    <property type="entry name" value="Ribosomal_bL9_bac/chp"/>
</dbReference>
<dbReference type="InterPro" id="IPR020069">
    <property type="entry name" value="Ribosomal_bL9_C"/>
</dbReference>
<dbReference type="InterPro" id="IPR036791">
    <property type="entry name" value="Ribosomal_bL9_C_sf"/>
</dbReference>
<dbReference type="InterPro" id="IPR020070">
    <property type="entry name" value="Ribosomal_bL9_N"/>
</dbReference>
<dbReference type="InterPro" id="IPR036935">
    <property type="entry name" value="Ribosomal_bL9_N_sf"/>
</dbReference>
<dbReference type="NCBIfam" id="TIGR00158">
    <property type="entry name" value="L9"/>
    <property type="match status" value="1"/>
</dbReference>
<dbReference type="PANTHER" id="PTHR21368">
    <property type="entry name" value="50S RIBOSOMAL PROTEIN L9"/>
    <property type="match status" value="1"/>
</dbReference>
<dbReference type="Pfam" id="PF03948">
    <property type="entry name" value="Ribosomal_L9_C"/>
    <property type="match status" value="1"/>
</dbReference>
<dbReference type="Pfam" id="PF01281">
    <property type="entry name" value="Ribosomal_L9_N"/>
    <property type="match status" value="1"/>
</dbReference>
<dbReference type="SUPFAM" id="SSF55658">
    <property type="entry name" value="L9 N-domain-like"/>
    <property type="match status" value="1"/>
</dbReference>
<dbReference type="SUPFAM" id="SSF55653">
    <property type="entry name" value="Ribosomal protein L9 C-domain"/>
    <property type="match status" value="1"/>
</dbReference>
<dbReference type="PROSITE" id="PS00651">
    <property type="entry name" value="RIBOSOMAL_L9"/>
    <property type="match status" value="1"/>
</dbReference>
<feature type="chain" id="PRO_0000176631" description="Large ribosomal subunit protein bL9">
    <location>
        <begin position="1"/>
        <end position="167"/>
    </location>
</feature>
<comment type="function">
    <text evidence="1">Binds to the 23S rRNA.</text>
</comment>
<comment type="similarity">
    <text evidence="1">Belongs to the bacterial ribosomal protein bL9 family.</text>
</comment>
<gene>
    <name evidence="1" type="primary">rplI</name>
    <name type="synonym">rl9</name>
    <name type="ordered locus">CT_803</name>
</gene>
<proteinExistence type="inferred from homology"/>
<reference key="1">
    <citation type="journal article" date="1998" name="Science">
        <title>Genome sequence of an obligate intracellular pathogen of humans: Chlamydia trachomatis.</title>
        <authorList>
            <person name="Stephens R.S."/>
            <person name="Kalman S."/>
            <person name="Lammel C.J."/>
            <person name="Fan J."/>
            <person name="Marathe R."/>
            <person name="Aravind L."/>
            <person name="Mitchell W.P."/>
            <person name="Olinger L."/>
            <person name="Tatusov R.L."/>
            <person name="Zhao Q."/>
            <person name="Koonin E.V."/>
            <person name="Davis R.W."/>
        </authorList>
    </citation>
    <scope>NUCLEOTIDE SEQUENCE [LARGE SCALE GENOMIC DNA]</scope>
    <source>
        <strain>ATCC VR-885 / DSM 19411 / UW-3/Cx</strain>
    </source>
</reference>